<keyword id="KW-1185">Reference proteome</keyword>
<keyword id="KW-0687">Ribonucleoprotein</keyword>
<keyword id="KW-0689">Ribosomal protein</keyword>
<keyword id="KW-0694">RNA-binding</keyword>
<keyword id="KW-0699">rRNA-binding</keyword>
<gene>
    <name evidence="1" type="primary">rplO</name>
    <name type="ordered locus">SynRCC307_2133</name>
</gene>
<name>RL15_SYNR3</name>
<proteinExistence type="inferred from homology"/>
<feature type="chain" id="PRO_1000054555" description="Large ribosomal subunit protein uL15">
    <location>
        <begin position="1"/>
        <end position="150"/>
    </location>
</feature>
<feature type="region of interest" description="Disordered" evidence="2">
    <location>
        <begin position="1"/>
        <end position="57"/>
    </location>
</feature>
<feature type="compositionally biased region" description="Basic residues" evidence="2">
    <location>
        <begin position="12"/>
        <end position="23"/>
    </location>
</feature>
<feature type="compositionally biased region" description="Gly residues" evidence="2">
    <location>
        <begin position="25"/>
        <end position="37"/>
    </location>
</feature>
<dbReference type="EMBL" id="CT978603">
    <property type="protein sequence ID" value="CAK29036.1"/>
    <property type="molecule type" value="Genomic_DNA"/>
</dbReference>
<dbReference type="SMR" id="A5GVX7"/>
<dbReference type="STRING" id="316278.SynRCC307_2133"/>
<dbReference type="KEGG" id="syr:SynRCC307_2133"/>
<dbReference type="eggNOG" id="COG0200">
    <property type="taxonomic scope" value="Bacteria"/>
</dbReference>
<dbReference type="HOGENOM" id="CLU_055188_4_2_3"/>
<dbReference type="OrthoDB" id="9810293at2"/>
<dbReference type="Proteomes" id="UP000001115">
    <property type="component" value="Chromosome"/>
</dbReference>
<dbReference type="GO" id="GO:0022625">
    <property type="term" value="C:cytosolic large ribosomal subunit"/>
    <property type="evidence" value="ECO:0007669"/>
    <property type="project" value="TreeGrafter"/>
</dbReference>
<dbReference type="GO" id="GO:0019843">
    <property type="term" value="F:rRNA binding"/>
    <property type="evidence" value="ECO:0007669"/>
    <property type="project" value="UniProtKB-UniRule"/>
</dbReference>
<dbReference type="GO" id="GO:0003735">
    <property type="term" value="F:structural constituent of ribosome"/>
    <property type="evidence" value="ECO:0007669"/>
    <property type="project" value="InterPro"/>
</dbReference>
<dbReference type="GO" id="GO:0006412">
    <property type="term" value="P:translation"/>
    <property type="evidence" value="ECO:0007669"/>
    <property type="project" value="UniProtKB-UniRule"/>
</dbReference>
<dbReference type="Gene3D" id="3.100.10.10">
    <property type="match status" value="1"/>
</dbReference>
<dbReference type="HAMAP" id="MF_01341">
    <property type="entry name" value="Ribosomal_uL15"/>
    <property type="match status" value="1"/>
</dbReference>
<dbReference type="InterPro" id="IPR030878">
    <property type="entry name" value="Ribosomal_uL15"/>
</dbReference>
<dbReference type="InterPro" id="IPR021131">
    <property type="entry name" value="Ribosomal_uL15/eL18"/>
</dbReference>
<dbReference type="InterPro" id="IPR036227">
    <property type="entry name" value="Ribosomal_uL15/eL18_sf"/>
</dbReference>
<dbReference type="InterPro" id="IPR005749">
    <property type="entry name" value="Ribosomal_uL15_bac-type"/>
</dbReference>
<dbReference type="InterPro" id="IPR001196">
    <property type="entry name" value="Ribosomal_uL15_CS"/>
</dbReference>
<dbReference type="NCBIfam" id="TIGR01071">
    <property type="entry name" value="rplO_bact"/>
    <property type="match status" value="1"/>
</dbReference>
<dbReference type="PANTHER" id="PTHR12934">
    <property type="entry name" value="50S RIBOSOMAL PROTEIN L15"/>
    <property type="match status" value="1"/>
</dbReference>
<dbReference type="PANTHER" id="PTHR12934:SF11">
    <property type="entry name" value="LARGE RIBOSOMAL SUBUNIT PROTEIN UL15M"/>
    <property type="match status" value="1"/>
</dbReference>
<dbReference type="Pfam" id="PF00828">
    <property type="entry name" value="Ribosomal_L27A"/>
    <property type="match status" value="1"/>
</dbReference>
<dbReference type="SUPFAM" id="SSF52080">
    <property type="entry name" value="Ribosomal proteins L15p and L18e"/>
    <property type="match status" value="1"/>
</dbReference>
<dbReference type="PROSITE" id="PS00475">
    <property type="entry name" value="RIBOSOMAL_L15"/>
    <property type="match status" value="1"/>
</dbReference>
<reference key="1">
    <citation type="submission" date="2006-05" db="EMBL/GenBank/DDBJ databases">
        <authorList>
            <consortium name="Genoscope"/>
        </authorList>
    </citation>
    <scope>NUCLEOTIDE SEQUENCE [LARGE SCALE GENOMIC DNA]</scope>
    <source>
        <strain>RCC307</strain>
    </source>
</reference>
<evidence type="ECO:0000255" key="1">
    <source>
        <dbReference type="HAMAP-Rule" id="MF_01341"/>
    </source>
</evidence>
<evidence type="ECO:0000256" key="2">
    <source>
        <dbReference type="SAM" id="MobiDB-lite"/>
    </source>
</evidence>
<evidence type="ECO:0000305" key="3"/>
<sequence length="150" mass="16054">MSLTLQSLKPQKGARRRKMRKGRGIAAGQGASCGFGMRGQKSRSGRPTRPGFEGGQMPLYRRVPKLKHFTLVNPKRFTVVNVGELAELKAGTVVTRDSLTEAGILTSPKHALKVLGDGELKVKLTVHAAAFTASAREKIEAAGGSCELID</sequence>
<protein>
    <recommendedName>
        <fullName evidence="1">Large ribosomal subunit protein uL15</fullName>
    </recommendedName>
    <alternativeName>
        <fullName evidence="3">50S ribosomal protein L15</fullName>
    </alternativeName>
</protein>
<organism>
    <name type="scientific">Synechococcus sp. (strain RCC307)</name>
    <dbReference type="NCBI Taxonomy" id="316278"/>
    <lineage>
        <taxon>Bacteria</taxon>
        <taxon>Bacillati</taxon>
        <taxon>Cyanobacteriota</taxon>
        <taxon>Cyanophyceae</taxon>
        <taxon>Synechococcales</taxon>
        <taxon>Synechococcaceae</taxon>
        <taxon>Synechococcus</taxon>
    </lineage>
</organism>
<comment type="function">
    <text evidence="1">Binds to the 23S rRNA.</text>
</comment>
<comment type="subunit">
    <text evidence="1">Part of the 50S ribosomal subunit.</text>
</comment>
<comment type="similarity">
    <text evidence="1">Belongs to the universal ribosomal protein uL15 family.</text>
</comment>
<accession>A5GVX7</accession>